<proteinExistence type="evidence at protein level"/>
<organism>
    <name type="scientific">Xenopus laevis</name>
    <name type="common">African clawed frog</name>
    <dbReference type="NCBI Taxonomy" id="8355"/>
    <lineage>
        <taxon>Eukaryota</taxon>
        <taxon>Metazoa</taxon>
        <taxon>Chordata</taxon>
        <taxon>Craniata</taxon>
        <taxon>Vertebrata</taxon>
        <taxon>Euteleostomi</taxon>
        <taxon>Amphibia</taxon>
        <taxon>Batrachia</taxon>
        <taxon>Anura</taxon>
        <taxon>Pipoidea</taxon>
        <taxon>Pipidae</taxon>
        <taxon>Xenopodinae</taxon>
        <taxon>Xenopus</taxon>
        <taxon>Xenopus</taxon>
    </lineage>
</organism>
<protein>
    <recommendedName>
        <fullName>HAUS augmin-like complex subunit 8</fullName>
    </recommendedName>
    <alternativeName>
        <fullName>HEC1/NDC80-interacting centrosome-associated protein 1</fullName>
    </alternativeName>
    <alternativeName>
        <fullName>Sarcoma antigen NY-SAR-48 homolog</fullName>
    </alternativeName>
</protein>
<evidence type="ECO:0000250" key="1"/>
<evidence type="ECO:0000250" key="2">
    <source>
        <dbReference type="UniProtKB" id="Q9BT25"/>
    </source>
</evidence>
<evidence type="ECO:0000255" key="3"/>
<evidence type="ECO:0000256" key="4">
    <source>
        <dbReference type="SAM" id="MobiDB-lite"/>
    </source>
</evidence>
<evidence type="ECO:0000305" key="5"/>
<name>HAUS8_XENLA</name>
<accession>Q0IHJ3</accession>
<dbReference type="EMBL" id="BC123131">
    <property type="protein sequence ID" value="AAI23132.1"/>
    <property type="molecule type" value="mRNA"/>
</dbReference>
<dbReference type="RefSeq" id="NP_001090302.1">
    <property type="nucleotide sequence ID" value="NM_001096833.1"/>
</dbReference>
<dbReference type="PDB" id="8AT3">
    <property type="method" value="EM"/>
    <property type="resolution" value="33.00 A"/>
    <property type="chains" value="H=1-367"/>
</dbReference>
<dbReference type="PDB" id="8AT4">
    <property type="method" value="EM"/>
    <property type="resolution" value="33.00 A"/>
    <property type="chains" value="H=1-367"/>
</dbReference>
<dbReference type="PDB" id="8FCK">
    <property type="method" value="EM"/>
    <property type="resolution" value="6.88 A"/>
    <property type="chains" value="H=1-367"/>
</dbReference>
<dbReference type="PDBsum" id="8AT3"/>
<dbReference type="PDBsum" id="8AT4"/>
<dbReference type="PDBsum" id="8FCK"/>
<dbReference type="EMDB" id="EMD-15632"/>
<dbReference type="EMDB" id="EMD-15633"/>
<dbReference type="EMDB" id="EMD-28981"/>
<dbReference type="SMR" id="Q0IHJ3"/>
<dbReference type="DNASU" id="779211"/>
<dbReference type="GeneID" id="779211"/>
<dbReference type="KEGG" id="xla:779211"/>
<dbReference type="AGR" id="Xenbase:XB-GENE-5797188"/>
<dbReference type="CTD" id="779211"/>
<dbReference type="Xenbase" id="XB-GENE-5797188">
    <property type="gene designation" value="haus8.L"/>
</dbReference>
<dbReference type="OrthoDB" id="10050218at2759"/>
<dbReference type="Proteomes" id="UP000186698">
    <property type="component" value="Chromosome 1L"/>
</dbReference>
<dbReference type="Bgee" id="779211">
    <property type="expression patterns" value="Expressed in oocyte and 16 other cell types or tissues"/>
</dbReference>
<dbReference type="GO" id="GO:0005813">
    <property type="term" value="C:centrosome"/>
    <property type="evidence" value="ECO:0007669"/>
    <property type="project" value="UniProtKB-SubCell"/>
</dbReference>
<dbReference type="GO" id="GO:0005737">
    <property type="term" value="C:cytoplasm"/>
    <property type="evidence" value="ECO:0007669"/>
    <property type="project" value="UniProtKB-SubCell"/>
</dbReference>
<dbReference type="GO" id="GO:0070652">
    <property type="term" value="C:HAUS complex"/>
    <property type="evidence" value="ECO:0000250"/>
    <property type="project" value="UniProtKB"/>
</dbReference>
<dbReference type="GO" id="GO:1990498">
    <property type="term" value="C:mitotic spindle microtubule"/>
    <property type="evidence" value="ECO:0000250"/>
    <property type="project" value="UniProtKB"/>
</dbReference>
<dbReference type="GO" id="GO:0000922">
    <property type="term" value="C:spindle pole"/>
    <property type="evidence" value="ECO:0007669"/>
    <property type="project" value="UniProtKB-SubCell"/>
</dbReference>
<dbReference type="GO" id="GO:0051301">
    <property type="term" value="P:cell division"/>
    <property type="evidence" value="ECO:0007669"/>
    <property type="project" value="UniProtKB-KW"/>
</dbReference>
<dbReference type="GO" id="GO:0007098">
    <property type="term" value="P:centrosome cycle"/>
    <property type="evidence" value="ECO:0000250"/>
    <property type="project" value="UniProtKB"/>
</dbReference>
<dbReference type="GO" id="GO:0051225">
    <property type="term" value="P:spindle assembly"/>
    <property type="evidence" value="ECO:0000250"/>
    <property type="project" value="UniProtKB"/>
</dbReference>
<gene>
    <name type="primary">haus8</name>
    <name type="synonym">hice1</name>
</gene>
<reference key="1">
    <citation type="submission" date="2006-09" db="EMBL/GenBank/DDBJ databases">
        <authorList>
            <consortium name="NIH - Xenopus Gene Collection (XGC) project"/>
        </authorList>
    </citation>
    <scope>NUCLEOTIDE SEQUENCE [LARGE SCALE MRNA]</scope>
    <source>
        <tissue>Testis</tissue>
    </source>
</reference>
<sequence length="367" mass="41084">MSEAGVAPIEDGSQNSSGGSSGDAALKKSKGGAKVVKSRYMQIGRSKVSKNSLANTTVCSGGKVPERGSGGTPTRRSLAPHKAKITAAVPLPALDGSIFTKEDLQSTLLDGHRIARPDLDLSVINDRTLQKITPRPVVTSEQKKPKRDTTPVNLVPEDMVEMIESQTLLLTYLTIKMQKNLFRLEEKAERNLLLVNDQKDQLQETIHMMKRDLTLLQREERLRDLIEKQDEVLTPVVTSKDPFKDNYTTFATALDSTRHQLAIKNIHITGNRHRYLEELQKHLAITKSLLEEIMPSHASENAESFDTIKDLENIVLKTDEELARSFRQILDLSFKVNKEISLQSQKAVEETCESALVRQWYFDGSLP</sequence>
<keyword id="KW-0002">3D-structure</keyword>
<keyword id="KW-0131">Cell cycle</keyword>
<keyword id="KW-0132">Cell division</keyword>
<keyword id="KW-0175">Coiled coil</keyword>
<keyword id="KW-0963">Cytoplasm</keyword>
<keyword id="KW-0206">Cytoskeleton</keyword>
<keyword id="KW-0493">Microtubule</keyword>
<keyword id="KW-0498">Mitosis</keyword>
<keyword id="KW-1185">Reference proteome</keyword>
<feature type="chain" id="PRO_0000319940" description="HAUS augmin-like complex subunit 8">
    <location>
        <begin position="1"/>
        <end position="367"/>
    </location>
</feature>
<feature type="region of interest" description="Disordered" evidence="4">
    <location>
        <begin position="1"/>
        <end position="35"/>
    </location>
</feature>
<feature type="region of interest" description="Disordered" evidence="4">
    <location>
        <begin position="54"/>
        <end position="81"/>
    </location>
</feature>
<feature type="coiled-coil region" evidence="3">
    <location>
        <begin position="183"/>
        <end position="221"/>
    </location>
</feature>
<comment type="function">
    <text evidence="1">Contributes to mitotic spindle assembly, maintenance of centrosome integrity and completion of cytokinesis as part of the HAUS augmin-like complex.</text>
</comment>
<comment type="subunit">
    <text evidence="2">Component of the HAUS augmin-like complex. The complex interacts with the gamma-tubulin ring complex and this interaction is required for spindle assembly. Associates with microtubules. The interaction with microtubules is strong during mitosis, while it is weak or absent during interphase. It is unclear whether this interaction is direct or indirect (By similarity).</text>
</comment>
<comment type="subcellular location">
    <subcellularLocation>
        <location evidence="2">Cytoplasm</location>
    </subcellularLocation>
    <subcellularLocation>
        <location evidence="2">Cytoplasm</location>
        <location evidence="2">Cytoskeleton</location>
        <location evidence="2">Microtubule organizing center</location>
        <location evidence="2">Centrosome</location>
    </subcellularLocation>
    <subcellularLocation>
        <location evidence="2">Cytoplasm</location>
        <location evidence="2">Cytoskeleton</location>
        <location evidence="2">Spindle</location>
    </subcellularLocation>
    <subcellularLocation>
        <location evidence="2">Cytoplasm</location>
        <location evidence="2">Cytoskeleton</location>
        <location evidence="2">Spindle pole</location>
    </subcellularLocation>
    <text evidence="2">During interphase, primarily cytoplasmic and associates with centrosomes and with the mitotic spindles, preferentially at the spindle pole vicinity. During anaphase and telophase, additionally associates with the spindle midzone and midbody, respectively. Localizes to mitotic spindle microtubules (By similarity).</text>
</comment>
<comment type="similarity">
    <text evidence="5">Belongs to the HAUS8 family.</text>
</comment>